<reference key="1">
    <citation type="journal article" date="2003" name="Genome Res.">
        <title>The secreted protein discovery initiative (SPDI), a large-scale effort to identify novel human secreted and transmembrane proteins: a bioinformatics assessment.</title>
        <authorList>
            <person name="Clark H.F."/>
            <person name="Gurney A.L."/>
            <person name="Abaya E."/>
            <person name="Baker K."/>
            <person name="Baldwin D.T."/>
            <person name="Brush J."/>
            <person name="Chen J."/>
            <person name="Chow B."/>
            <person name="Chui C."/>
            <person name="Crowley C."/>
            <person name="Currell B."/>
            <person name="Deuel B."/>
            <person name="Dowd P."/>
            <person name="Eaton D."/>
            <person name="Foster J.S."/>
            <person name="Grimaldi C."/>
            <person name="Gu Q."/>
            <person name="Hass P.E."/>
            <person name="Heldens S."/>
            <person name="Huang A."/>
            <person name="Kim H.S."/>
            <person name="Klimowski L."/>
            <person name="Jin Y."/>
            <person name="Johnson S."/>
            <person name="Lee J."/>
            <person name="Lewis L."/>
            <person name="Liao D."/>
            <person name="Mark M.R."/>
            <person name="Robbie E."/>
            <person name="Sanchez C."/>
            <person name="Schoenfeld J."/>
            <person name="Seshagiri S."/>
            <person name="Simmons L."/>
            <person name="Singh J."/>
            <person name="Smith V."/>
            <person name="Stinson J."/>
            <person name="Vagts A."/>
            <person name="Vandlen R.L."/>
            <person name="Watanabe C."/>
            <person name="Wieand D."/>
            <person name="Woods K."/>
            <person name="Xie M.-H."/>
            <person name="Yansura D.G."/>
            <person name="Yi S."/>
            <person name="Yu G."/>
            <person name="Yuan J."/>
            <person name="Zhang M."/>
            <person name="Zhang Z."/>
            <person name="Goddard A.D."/>
            <person name="Wood W.I."/>
            <person name="Godowski P.J."/>
            <person name="Gray A.M."/>
        </authorList>
    </citation>
    <scope>NUCLEOTIDE SEQUENCE [LARGE SCALE MRNA]</scope>
</reference>
<reference key="2">
    <citation type="journal article" date="2004" name="Genome Res.">
        <title>The status, quality, and expansion of the NIH full-length cDNA project: the Mammalian Gene Collection (MGC).</title>
        <authorList>
            <consortium name="The MGC Project Team"/>
        </authorList>
    </citation>
    <scope>NUCLEOTIDE SEQUENCE [LARGE SCALE MRNA]</scope>
    <source>
        <tissue>Choriocarcinoma</tissue>
        <tissue>Placenta</tissue>
    </source>
</reference>
<dbReference type="EC" id="2.3.1.225" evidence="4"/>
<dbReference type="EMBL" id="AY358448">
    <property type="protein sequence ID" value="AAQ88813.1"/>
    <property type="molecule type" value="mRNA"/>
</dbReference>
<dbReference type="EMBL" id="BC005015">
    <property type="protein sequence ID" value="AAH05015.1"/>
    <property type="molecule type" value="mRNA"/>
</dbReference>
<dbReference type="EMBL" id="BC057833">
    <property type="protein sequence ID" value="AAH57833.2"/>
    <property type="molecule type" value="mRNA"/>
</dbReference>
<dbReference type="CCDS" id="CCDS8143.1"/>
<dbReference type="RefSeq" id="NP_997223.1">
    <property type="nucleotide sequence ID" value="NM_207340.3"/>
</dbReference>
<dbReference type="SMR" id="Q6UX98"/>
<dbReference type="BioGRID" id="129032">
    <property type="interactions" value="13"/>
</dbReference>
<dbReference type="FunCoup" id="Q6UX98">
    <property type="interactions" value="1160"/>
</dbReference>
<dbReference type="IntAct" id="Q6UX98">
    <property type="interactions" value="17"/>
</dbReference>
<dbReference type="STRING" id="9606.ENSP00000309429"/>
<dbReference type="iPTMnet" id="Q6UX98"/>
<dbReference type="PhosphoSitePlus" id="Q6UX98"/>
<dbReference type="SwissPalm" id="Q6UX98"/>
<dbReference type="BioMuta" id="ZDHHC24"/>
<dbReference type="DMDM" id="74758568"/>
<dbReference type="jPOST" id="Q6UX98"/>
<dbReference type="MassIVE" id="Q6UX98"/>
<dbReference type="PaxDb" id="9606-ENSP00000309429"/>
<dbReference type="PeptideAtlas" id="Q6UX98"/>
<dbReference type="ProteomicsDB" id="67578"/>
<dbReference type="Pumba" id="Q6UX98"/>
<dbReference type="Antibodypedia" id="16343">
    <property type="antibodies" value="95 antibodies from 15 providers"/>
</dbReference>
<dbReference type="DNASU" id="254359"/>
<dbReference type="Ensembl" id="ENST00000310442.5">
    <property type="protein sequence ID" value="ENSP00000309429.3"/>
    <property type="gene ID" value="ENSG00000174165.8"/>
</dbReference>
<dbReference type="GeneID" id="254359"/>
<dbReference type="KEGG" id="hsa:254359"/>
<dbReference type="MANE-Select" id="ENST00000310442.5">
    <property type="protein sequence ID" value="ENSP00000309429.3"/>
    <property type="RefSeq nucleotide sequence ID" value="NM_207340.3"/>
    <property type="RefSeq protein sequence ID" value="NP_997223.1"/>
</dbReference>
<dbReference type="UCSC" id="uc001oin.2">
    <property type="organism name" value="human"/>
</dbReference>
<dbReference type="AGR" id="HGNC:27387"/>
<dbReference type="CTD" id="254359"/>
<dbReference type="DisGeNET" id="254359"/>
<dbReference type="GeneCards" id="ZDHHC24"/>
<dbReference type="HGNC" id="HGNC:27387">
    <property type="gene designation" value="ZDHHC24"/>
</dbReference>
<dbReference type="HPA" id="ENSG00000174165">
    <property type="expression patterns" value="Low tissue specificity"/>
</dbReference>
<dbReference type="MalaCards" id="ZDHHC24"/>
<dbReference type="neXtProt" id="NX_Q6UX98"/>
<dbReference type="OpenTargets" id="ENSG00000174165"/>
<dbReference type="PharmGKB" id="PA142670531"/>
<dbReference type="VEuPathDB" id="HostDB:ENSG00000174165"/>
<dbReference type="eggNOG" id="KOG1311">
    <property type="taxonomic scope" value="Eukaryota"/>
</dbReference>
<dbReference type="GeneTree" id="ENSGT00940000162361"/>
<dbReference type="HOGENOM" id="CLU_027721_5_2_1"/>
<dbReference type="InParanoid" id="Q6UX98"/>
<dbReference type="OMA" id="RMHLTWL"/>
<dbReference type="OrthoDB" id="302728at2759"/>
<dbReference type="PAN-GO" id="Q6UX98">
    <property type="GO annotations" value="5 GO annotations based on evolutionary models"/>
</dbReference>
<dbReference type="PhylomeDB" id="Q6UX98"/>
<dbReference type="TreeFam" id="TF319523"/>
<dbReference type="PathwayCommons" id="Q6UX98"/>
<dbReference type="SignaLink" id="Q6UX98"/>
<dbReference type="BioGRID-ORCS" id="254359">
    <property type="hits" value="18 hits in 1158 CRISPR screens"/>
</dbReference>
<dbReference type="ChiTaRS" id="ZDHHC24">
    <property type="organism name" value="human"/>
</dbReference>
<dbReference type="GenomeRNAi" id="254359"/>
<dbReference type="Pharos" id="Q6UX98">
    <property type="development level" value="Tdark"/>
</dbReference>
<dbReference type="PRO" id="PR:Q6UX98"/>
<dbReference type="Proteomes" id="UP000005640">
    <property type="component" value="Chromosome 11"/>
</dbReference>
<dbReference type="RNAct" id="Q6UX98">
    <property type="molecule type" value="protein"/>
</dbReference>
<dbReference type="Bgee" id="ENSG00000174165">
    <property type="expression patterns" value="Expressed in parotid gland and 168 other cell types or tissues"/>
</dbReference>
<dbReference type="ExpressionAtlas" id="Q6UX98">
    <property type="expression patterns" value="baseline and differential"/>
</dbReference>
<dbReference type="GO" id="GO:0005783">
    <property type="term" value="C:endoplasmic reticulum"/>
    <property type="evidence" value="ECO:0000318"/>
    <property type="project" value="GO_Central"/>
</dbReference>
<dbReference type="GO" id="GO:0005794">
    <property type="term" value="C:Golgi apparatus"/>
    <property type="evidence" value="ECO:0000318"/>
    <property type="project" value="GO_Central"/>
</dbReference>
<dbReference type="GO" id="GO:0016020">
    <property type="term" value="C:membrane"/>
    <property type="evidence" value="ECO:0007669"/>
    <property type="project" value="UniProtKB-SubCell"/>
</dbReference>
<dbReference type="GO" id="GO:0019706">
    <property type="term" value="F:protein-cysteine S-palmitoyltransferase activity"/>
    <property type="evidence" value="ECO:0000318"/>
    <property type="project" value="GO_Central"/>
</dbReference>
<dbReference type="GO" id="GO:0006612">
    <property type="term" value="P:protein targeting to membrane"/>
    <property type="evidence" value="ECO:0000318"/>
    <property type="project" value="GO_Central"/>
</dbReference>
<dbReference type="InterPro" id="IPR001594">
    <property type="entry name" value="Palmitoyltrfase_DHHC"/>
</dbReference>
<dbReference type="InterPro" id="IPR039859">
    <property type="entry name" value="PFA4/ZDH16/20/ERF2-like"/>
</dbReference>
<dbReference type="PANTHER" id="PTHR22883:SF414">
    <property type="entry name" value="PALMITOYLTRANSFERASE ZDHHC24-RELATED"/>
    <property type="match status" value="1"/>
</dbReference>
<dbReference type="PANTHER" id="PTHR22883">
    <property type="entry name" value="ZINC FINGER DHHC DOMAIN CONTAINING PROTEIN"/>
    <property type="match status" value="1"/>
</dbReference>
<dbReference type="Pfam" id="PF01529">
    <property type="entry name" value="DHHC"/>
    <property type="match status" value="1"/>
</dbReference>
<dbReference type="PROSITE" id="PS50216">
    <property type="entry name" value="DHHC"/>
    <property type="match status" value="1"/>
</dbReference>
<name>ZDH24_HUMAN</name>
<proteinExistence type="evidence at protein level"/>
<sequence>MGQPWAAGSTDGAPAQLPLVLTALWAAAVGLELAYVLVLGPGPPPLGPLARALQLALAAFQLLNLLGNVGLFLRSDPSIRGVMLAGRGLGQGWAYCYQCQSQVPPRSGHCSACRVCILRRDHHCRLLGRCVGFGNYRPFLCLLLHAAGVLLHVSVLLGPALSALLRAHTPLHMAALLLLPWLMLLTGRVSLAQFALAFVTDTCVAGALLCGAGLLFHGMLLLRGQTTWEWARGQHSYDLGPCHNLQAALGPRWALVWLWPFLASPLPGDGITFQTTADVGHTAS</sequence>
<keyword id="KW-0012">Acyltransferase</keyword>
<keyword id="KW-0449">Lipoprotein</keyword>
<keyword id="KW-0472">Membrane</keyword>
<keyword id="KW-0564">Palmitate</keyword>
<keyword id="KW-1267">Proteomics identification</keyword>
<keyword id="KW-1185">Reference proteome</keyword>
<keyword id="KW-0808">Transferase</keyword>
<keyword id="KW-0812">Transmembrane</keyword>
<keyword id="KW-1133">Transmembrane helix</keyword>
<protein>
    <recommendedName>
        <fullName evidence="4">Probable palmitoyltransferase ZDHHC24</fullName>
        <ecNumber evidence="4">2.3.1.225</ecNumber>
    </recommendedName>
    <alternativeName>
        <fullName evidence="6">Zinc finger DHHC domain-containing protein 24</fullName>
    </alternativeName>
</protein>
<organism>
    <name type="scientific">Homo sapiens</name>
    <name type="common">Human</name>
    <dbReference type="NCBI Taxonomy" id="9606"/>
    <lineage>
        <taxon>Eukaryota</taxon>
        <taxon>Metazoa</taxon>
        <taxon>Chordata</taxon>
        <taxon>Craniata</taxon>
        <taxon>Vertebrata</taxon>
        <taxon>Euteleostomi</taxon>
        <taxon>Mammalia</taxon>
        <taxon>Eutheria</taxon>
        <taxon>Euarchontoglires</taxon>
        <taxon>Primates</taxon>
        <taxon>Haplorrhini</taxon>
        <taxon>Catarrhini</taxon>
        <taxon>Hominidae</taxon>
        <taxon>Homo</taxon>
    </lineage>
</organism>
<evidence type="ECO:0000250" key="1">
    <source>
        <dbReference type="UniProtKB" id="Q8IUH5"/>
    </source>
</evidence>
<evidence type="ECO:0000255" key="2"/>
<evidence type="ECO:0000255" key="3">
    <source>
        <dbReference type="PROSITE-ProRule" id="PRU00067"/>
    </source>
</evidence>
<evidence type="ECO:0000305" key="4"/>
<evidence type="ECO:0000312" key="5">
    <source>
        <dbReference type="EMBL" id="AAQ88813.1"/>
    </source>
</evidence>
<evidence type="ECO:0000312" key="6">
    <source>
        <dbReference type="HGNC" id="HGNC:27387"/>
    </source>
</evidence>
<comment type="function">
    <text evidence="4">Probable palmitoyltransferase that could catalyze the addition of palmitate onto various protein substrates.</text>
</comment>
<comment type="catalytic activity">
    <reaction evidence="4">
        <text>L-cysteinyl-[protein] + hexadecanoyl-CoA = S-hexadecanoyl-L-cysteinyl-[protein] + CoA</text>
        <dbReference type="Rhea" id="RHEA:36683"/>
        <dbReference type="Rhea" id="RHEA-COMP:10131"/>
        <dbReference type="Rhea" id="RHEA-COMP:11032"/>
        <dbReference type="ChEBI" id="CHEBI:29950"/>
        <dbReference type="ChEBI" id="CHEBI:57287"/>
        <dbReference type="ChEBI" id="CHEBI:57379"/>
        <dbReference type="ChEBI" id="CHEBI:74151"/>
        <dbReference type="EC" id="2.3.1.225"/>
    </reaction>
    <physiologicalReaction direction="left-to-right" evidence="4">
        <dbReference type="Rhea" id="RHEA:36684"/>
    </physiologicalReaction>
</comment>
<comment type="interaction">
    <interactant intactId="EBI-10254561">
        <id>Q6UX98</id>
    </interactant>
    <interactant intactId="EBI-712648">
        <id>O95994</id>
        <label>AGR2</label>
    </interactant>
    <organismsDiffer>false</organismsDiffer>
    <experiments>3</experiments>
</comment>
<comment type="interaction">
    <interactant intactId="EBI-10254561">
        <id>Q6UX98</id>
    </interactant>
    <interactant intactId="EBI-13059134">
        <id>Q13520</id>
        <label>AQP6</label>
    </interactant>
    <organismsDiffer>false</organismsDiffer>
    <experiments>3</experiments>
</comment>
<comment type="interaction">
    <interactant intactId="EBI-10254561">
        <id>Q6UX98</id>
    </interactant>
    <interactant intactId="EBI-3915253">
        <id>Q15125</id>
        <label>EBP</label>
    </interactant>
    <organismsDiffer>false</organismsDiffer>
    <experiments>3</experiments>
</comment>
<comment type="interaction">
    <interactant intactId="EBI-10254561">
        <id>Q6UX98</id>
    </interactant>
    <interactant intactId="EBI-1052304">
        <id>Q8NBQ5</id>
        <label>HSD17B11</label>
    </interactant>
    <organismsDiffer>false</organismsDiffer>
    <experiments>3</experiments>
</comment>
<comment type="interaction">
    <interactant intactId="EBI-10254561">
        <id>Q6UX98</id>
    </interactant>
    <interactant intactId="EBI-3905457">
        <id>P38484</id>
        <label>IFNGR2</label>
    </interactant>
    <organismsDiffer>false</organismsDiffer>
    <experiments>3</experiments>
</comment>
<comment type="interaction">
    <interactant intactId="EBI-10254561">
        <id>Q6UX98</id>
    </interactant>
    <interactant intactId="EBI-6509505">
        <id>Q0VD86</id>
        <label>INCA1</label>
    </interactant>
    <organismsDiffer>false</organismsDiffer>
    <experiments>3</experiments>
</comment>
<comment type="interaction">
    <interactant intactId="EBI-10254561">
        <id>Q6UX98</id>
    </interactant>
    <interactant intactId="EBI-12017638">
        <id>P48051</id>
        <label>KCNJ6</label>
    </interactant>
    <organismsDiffer>false</organismsDiffer>
    <experiments>3</experiments>
</comment>
<comment type="interaction">
    <interactant intactId="EBI-10254561">
        <id>Q6UX98</id>
    </interactant>
    <interactant intactId="EBI-373355">
        <id>Q5SR56</id>
        <label>MFSD14B</label>
    </interactant>
    <organismsDiffer>false</organismsDiffer>
    <experiments>3</experiments>
</comment>
<comment type="interaction">
    <interactant intactId="EBI-10254561">
        <id>Q6UX98</id>
    </interactant>
    <interactant intactId="EBI-742388">
        <id>Q9H8W4</id>
        <label>PLEKHF2</label>
    </interactant>
    <organismsDiffer>false</organismsDiffer>
    <experiments>3</experiments>
</comment>
<comment type="interaction">
    <interactant intactId="EBI-10254561">
        <id>Q6UX98</id>
    </interactant>
    <interactant intactId="EBI-307352">
        <id>Q04864</id>
        <label>REL</label>
    </interactant>
    <organismsDiffer>false</organismsDiffer>
    <experiments>3</experiments>
</comment>
<comment type="interaction">
    <interactant intactId="EBI-10254561">
        <id>Q6UX98</id>
    </interactant>
    <interactant intactId="EBI-10829018">
        <id>Q04864-2</id>
        <label>REL</label>
    </interactant>
    <organismsDiffer>false</organismsDiffer>
    <experiments>3</experiments>
</comment>
<comment type="interaction">
    <interactant intactId="EBI-10254561">
        <id>Q6UX98</id>
    </interactant>
    <interactant intactId="EBI-348482">
        <id>Q99942</id>
        <label>RNF5</label>
    </interactant>
    <organismsDiffer>false</organismsDiffer>
    <experiments>3</experiments>
</comment>
<comment type="interaction">
    <interactant intactId="EBI-10254561">
        <id>Q6UX98</id>
    </interactant>
    <interactant intactId="EBI-10819434">
        <id>Q9NPE6</id>
        <label>SPAG4</label>
    </interactant>
    <organismsDiffer>false</organismsDiffer>
    <experiments>3</experiments>
</comment>
<comment type="interaction">
    <interactant intactId="EBI-10254561">
        <id>Q6UX98</id>
    </interactant>
    <interactant intactId="EBI-12900395">
        <id>Q8TAV4</id>
        <label>STOML3</label>
    </interactant>
    <organismsDiffer>false</organismsDiffer>
    <experiments>3</experiments>
</comment>
<comment type="interaction">
    <interactant intactId="EBI-10254561">
        <id>Q6UX98</id>
    </interactant>
    <interactant intactId="EBI-22730169">
        <id>Q69YW2</id>
        <label>STUM</label>
    </interactant>
    <organismsDiffer>false</organismsDiffer>
    <experiments>3</experiments>
</comment>
<comment type="interaction">
    <interactant intactId="EBI-10254561">
        <id>Q6UX98</id>
    </interactant>
    <interactant intactId="EBI-533224">
        <id>P15884</id>
        <label>TCF4</label>
    </interactant>
    <organismsDiffer>false</organismsDiffer>
    <experiments>3</experiments>
</comment>
<comment type="interaction">
    <interactant intactId="EBI-10254561">
        <id>Q6UX98</id>
    </interactant>
    <interactant intactId="EBI-13636688">
        <id>P15884-3</id>
        <label>TCF4</label>
    </interactant>
    <organismsDiffer>false</organismsDiffer>
    <experiments>3</experiments>
</comment>
<comment type="interaction">
    <interactant intactId="EBI-10254561">
        <id>Q6UX98</id>
    </interactant>
    <interactant intactId="EBI-8638294">
        <id>Q9NUH8</id>
        <label>TMEM14B</label>
    </interactant>
    <organismsDiffer>false</organismsDiffer>
    <experiments>3</experiments>
</comment>
<comment type="interaction">
    <interactant intactId="EBI-10254561">
        <id>Q6UX98</id>
    </interactant>
    <interactant intactId="EBI-524131">
        <id>O43557</id>
        <label>TNFSF14</label>
    </interactant>
    <organismsDiffer>false</organismsDiffer>
    <experiments>3</experiments>
</comment>
<comment type="subcellular location">
    <subcellularLocation>
        <location evidence="2">Membrane</location>
        <topology evidence="2">Multi-pass membrane protein</topology>
    </subcellularLocation>
</comment>
<comment type="domain">
    <text evidence="1">The DHHC domain is required for palmitoyltransferase activity.</text>
</comment>
<comment type="similarity">
    <text evidence="4">Belongs to the DHHC palmitoyltransferase family.</text>
</comment>
<accession>Q6UX98</accession>
<accession>Q6PEW7</accession>
<accession>Q9BSJ0</accession>
<gene>
    <name evidence="6" type="primary">ZDHHC24</name>
    <name evidence="5" type="ORF">UNQ2528/PRO6027</name>
</gene>
<feature type="chain" id="PRO_0000233710" description="Probable palmitoyltransferase ZDHHC24">
    <location>
        <begin position="1"/>
        <end position="284"/>
    </location>
</feature>
<feature type="topological domain" description="Cytoplasmic" evidence="4">
    <location>
        <begin position="1"/>
        <end position="18"/>
    </location>
</feature>
<feature type="transmembrane region" description="Helical" evidence="2">
    <location>
        <begin position="19"/>
        <end position="39"/>
    </location>
</feature>
<feature type="topological domain" description="Extracellular" evidence="4">
    <location>
        <begin position="40"/>
        <end position="52"/>
    </location>
</feature>
<feature type="transmembrane region" description="Helical" evidence="2">
    <location>
        <begin position="53"/>
        <end position="73"/>
    </location>
</feature>
<feature type="topological domain" description="Cytoplasmic" evidence="4">
    <location>
        <begin position="74"/>
        <end position="137"/>
    </location>
</feature>
<feature type="transmembrane region" description="Helical" evidence="2">
    <location>
        <begin position="138"/>
        <end position="158"/>
    </location>
</feature>
<feature type="topological domain" description="Extracellular" evidence="4">
    <location>
        <begin position="159"/>
        <end position="166"/>
    </location>
</feature>
<feature type="transmembrane region" description="Helical" evidence="2">
    <location>
        <begin position="167"/>
        <end position="187"/>
    </location>
</feature>
<feature type="topological domain" description="Cytoplasmic" evidence="4">
    <location>
        <begin position="188"/>
        <end position="201"/>
    </location>
</feature>
<feature type="transmembrane region" description="Helical" evidence="2">
    <location>
        <begin position="202"/>
        <end position="222"/>
    </location>
</feature>
<feature type="topological domain" description="Extracellular" evidence="4">
    <location>
        <begin position="223"/>
        <end position="284"/>
    </location>
</feature>
<feature type="domain" description="DHHC" evidence="3">
    <location>
        <begin position="94"/>
        <end position="144"/>
    </location>
</feature>
<feature type="active site" description="S-palmitoyl cysteine intermediate" evidence="3">
    <location>
        <position position="124"/>
    </location>
</feature>